<organism>
    <name type="scientific">Chlorobaculum parvum (strain DSM 263 / NCIMB 8327)</name>
    <name type="common">Chlorobium vibrioforme subsp. thiosulfatophilum</name>
    <dbReference type="NCBI Taxonomy" id="517417"/>
    <lineage>
        <taxon>Bacteria</taxon>
        <taxon>Pseudomonadati</taxon>
        <taxon>Chlorobiota</taxon>
        <taxon>Chlorobiia</taxon>
        <taxon>Chlorobiales</taxon>
        <taxon>Chlorobiaceae</taxon>
        <taxon>Chlorobaculum</taxon>
    </lineage>
</organism>
<comment type="function">
    <text evidence="1">An aminoacyl-tRNA editing enzyme that deacylates mischarged D-aminoacyl-tRNAs. Also deacylates mischarged glycyl-tRNA(Ala), protecting cells against glycine mischarging by AlaRS. Acts via tRNA-based rather than protein-based catalysis; rejects L-amino acids rather than detecting D-amino acids in the active site. By recycling D-aminoacyl-tRNA to D-amino acids and free tRNA molecules, this enzyme counteracts the toxicity associated with the formation of D-aminoacyl-tRNA entities in vivo and helps enforce protein L-homochirality.</text>
</comment>
<comment type="catalytic activity">
    <reaction evidence="1">
        <text>glycyl-tRNA(Ala) + H2O = tRNA(Ala) + glycine + H(+)</text>
        <dbReference type="Rhea" id="RHEA:53744"/>
        <dbReference type="Rhea" id="RHEA-COMP:9657"/>
        <dbReference type="Rhea" id="RHEA-COMP:13640"/>
        <dbReference type="ChEBI" id="CHEBI:15377"/>
        <dbReference type="ChEBI" id="CHEBI:15378"/>
        <dbReference type="ChEBI" id="CHEBI:57305"/>
        <dbReference type="ChEBI" id="CHEBI:78442"/>
        <dbReference type="ChEBI" id="CHEBI:78522"/>
        <dbReference type="EC" id="3.1.1.96"/>
    </reaction>
</comment>
<comment type="catalytic activity">
    <reaction evidence="1">
        <text>a D-aminoacyl-tRNA + H2O = a tRNA + a D-alpha-amino acid + H(+)</text>
        <dbReference type="Rhea" id="RHEA:13953"/>
        <dbReference type="Rhea" id="RHEA-COMP:10123"/>
        <dbReference type="Rhea" id="RHEA-COMP:10124"/>
        <dbReference type="ChEBI" id="CHEBI:15377"/>
        <dbReference type="ChEBI" id="CHEBI:15378"/>
        <dbReference type="ChEBI" id="CHEBI:59871"/>
        <dbReference type="ChEBI" id="CHEBI:78442"/>
        <dbReference type="ChEBI" id="CHEBI:79333"/>
        <dbReference type="EC" id="3.1.1.96"/>
    </reaction>
</comment>
<comment type="subunit">
    <text evidence="1">Homodimer.</text>
</comment>
<comment type="subcellular location">
    <subcellularLocation>
        <location evidence="1">Cytoplasm</location>
    </subcellularLocation>
</comment>
<comment type="domain">
    <text evidence="1">A Gly-cisPro motif from one monomer fits into the active site of the other monomer to allow specific chiral rejection of L-amino acids.</text>
</comment>
<comment type="similarity">
    <text evidence="1">Belongs to the DTD family.</text>
</comment>
<feature type="chain" id="PRO_1000127505" description="D-aminoacyl-tRNA deacylase">
    <location>
        <begin position="1"/>
        <end position="149"/>
    </location>
</feature>
<feature type="short sequence motif" description="Gly-cisPro motif, important for rejection of L-amino acids" evidence="1">
    <location>
        <begin position="138"/>
        <end position="139"/>
    </location>
</feature>
<gene>
    <name evidence="1" type="primary">dtd</name>
    <name type="ordered locus">Cpar_0371</name>
</gene>
<accession>B3QL07</accession>
<keyword id="KW-0963">Cytoplasm</keyword>
<keyword id="KW-0378">Hydrolase</keyword>
<keyword id="KW-0694">RNA-binding</keyword>
<keyword id="KW-0820">tRNA-binding</keyword>
<sequence>MRCVVQRVREASVTIGGERFSSIGAGLLVLAGISREDTEADLAWMSRKLPNLRIFEDDEGRMNRSVKEIGGELLVVSQFTLYADASRGNRPGFTESAPSEVAQPLFDRFVELLRRESGLPVETGSFGADMQVSLINDGPVTIILESPKK</sequence>
<proteinExistence type="inferred from homology"/>
<protein>
    <recommendedName>
        <fullName evidence="1">D-aminoacyl-tRNA deacylase</fullName>
        <shortName evidence="1">DTD</shortName>
        <ecNumber evidence="1">3.1.1.96</ecNumber>
    </recommendedName>
    <alternativeName>
        <fullName evidence="1">Gly-tRNA(Ala) deacylase</fullName>
    </alternativeName>
</protein>
<name>DTD_CHLP8</name>
<dbReference type="EC" id="3.1.1.96" evidence="1"/>
<dbReference type="EMBL" id="CP001099">
    <property type="protein sequence ID" value="ACF10795.1"/>
    <property type="molecule type" value="Genomic_DNA"/>
</dbReference>
<dbReference type="RefSeq" id="WP_012501628.1">
    <property type="nucleotide sequence ID" value="NC_011027.1"/>
</dbReference>
<dbReference type="SMR" id="B3QL07"/>
<dbReference type="STRING" id="517417.Cpar_0371"/>
<dbReference type="KEGG" id="cpc:Cpar_0371"/>
<dbReference type="eggNOG" id="COG1490">
    <property type="taxonomic scope" value="Bacteria"/>
</dbReference>
<dbReference type="HOGENOM" id="CLU_076901_1_0_10"/>
<dbReference type="OrthoDB" id="9801395at2"/>
<dbReference type="Proteomes" id="UP000008811">
    <property type="component" value="Chromosome"/>
</dbReference>
<dbReference type="GO" id="GO:0005737">
    <property type="term" value="C:cytoplasm"/>
    <property type="evidence" value="ECO:0007669"/>
    <property type="project" value="UniProtKB-SubCell"/>
</dbReference>
<dbReference type="GO" id="GO:0051500">
    <property type="term" value="F:D-tyrosyl-tRNA(Tyr) deacylase activity"/>
    <property type="evidence" value="ECO:0007669"/>
    <property type="project" value="TreeGrafter"/>
</dbReference>
<dbReference type="GO" id="GO:0106026">
    <property type="term" value="F:Gly-tRNA(Ala) deacylase activity"/>
    <property type="evidence" value="ECO:0007669"/>
    <property type="project" value="UniProtKB-UniRule"/>
</dbReference>
<dbReference type="GO" id="GO:0043908">
    <property type="term" value="F:Ser(Gly)-tRNA(Ala) hydrolase activity"/>
    <property type="evidence" value="ECO:0007669"/>
    <property type="project" value="UniProtKB-UniRule"/>
</dbReference>
<dbReference type="GO" id="GO:0000049">
    <property type="term" value="F:tRNA binding"/>
    <property type="evidence" value="ECO:0007669"/>
    <property type="project" value="UniProtKB-UniRule"/>
</dbReference>
<dbReference type="GO" id="GO:0019478">
    <property type="term" value="P:D-amino acid catabolic process"/>
    <property type="evidence" value="ECO:0007669"/>
    <property type="project" value="UniProtKB-UniRule"/>
</dbReference>
<dbReference type="CDD" id="cd00563">
    <property type="entry name" value="Dtyr_deacylase"/>
    <property type="match status" value="1"/>
</dbReference>
<dbReference type="FunFam" id="3.50.80.10:FF:000001">
    <property type="entry name" value="D-aminoacyl-tRNA deacylase"/>
    <property type="match status" value="1"/>
</dbReference>
<dbReference type="Gene3D" id="3.50.80.10">
    <property type="entry name" value="D-tyrosyl-tRNA(Tyr) deacylase"/>
    <property type="match status" value="1"/>
</dbReference>
<dbReference type="HAMAP" id="MF_00518">
    <property type="entry name" value="Deacylase_Dtd"/>
    <property type="match status" value="1"/>
</dbReference>
<dbReference type="InterPro" id="IPR003732">
    <property type="entry name" value="Daa-tRNA_deacyls_DTD"/>
</dbReference>
<dbReference type="InterPro" id="IPR023509">
    <property type="entry name" value="DTD-like_sf"/>
</dbReference>
<dbReference type="NCBIfam" id="TIGR00256">
    <property type="entry name" value="D-aminoacyl-tRNA deacylase"/>
    <property type="match status" value="1"/>
</dbReference>
<dbReference type="PANTHER" id="PTHR10472:SF5">
    <property type="entry name" value="D-AMINOACYL-TRNA DEACYLASE 1"/>
    <property type="match status" value="1"/>
</dbReference>
<dbReference type="PANTHER" id="PTHR10472">
    <property type="entry name" value="D-TYROSYL-TRNA TYR DEACYLASE"/>
    <property type="match status" value="1"/>
</dbReference>
<dbReference type="Pfam" id="PF02580">
    <property type="entry name" value="Tyr_Deacylase"/>
    <property type="match status" value="1"/>
</dbReference>
<dbReference type="SUPFAM" id="SSF69500">
    <property type="entry name" value="DTD-like"/>
    <property type="match status" value="1"/>
</dbReference>
<evidence type="ECO:0000255" key="1">
    <source>
        <dbReference type="HAMAP-Rule" id="MF_00518"/>
    </source>
</evidence>
<reference key="1">
    <citation type="submission" date="2008-06" db="EMBL/GenBank/DDBJ databases">
        <title>Complete sequence of Chlorobaculum parvum NCIB 8327.</title>
        <authorList>
            <consortium name="US DOE Joint Genome Institute"/>
            <person name="Lucas S."/>
            <person name="Copeland A."/>
            <person name="Lapidus A."/>
            <person name="Glavina del Rio T."/>
            <person name="Dalin E."/>
            <person name="Tice H."/>
            <person name="Bruce D."/>
            <person name="Goodwin L."/>
            <person name="Pitluck S."/>
            <person name="Schmutz J."/>
            <person name="Larimer F."/>
            <person name="Land M."/>
            <person name="Hauser L."/>
            <person name="Kyrpides N."/>
            <person name="Mikhailova N."/>
            <person name="Zhao F."/>
            <person name="Li T."/>
            <person name="Liu Z."/>
            <person name="Overmann J."/>
            <person name="Bryant D.A."/>
            <person name="Richardson P."/>
        </authorList>
    </citation>
    <scope>NUCLEOTIDE SEQUENCE [LARGE SCALE GENOMIC DNA]</scope>
    <source>
        <strain>DSM 263 / NCIMB 8327</strain>
    </source>
</reference>